<reference key="1">
    <citation type="journal article" date="2006" name="J. Bacteriol.">
        <title>Complete genome sequence of Yersinia pestis strains Antiqua and Nepal516: evidence of gene reduction in an emerging pathogen.</title>
        <authorList>
            <person name="Chain P.S.G."/>
            <person name="Hu P."/>
            <person name="Malfatti S.A."/>
            <person name="Radnedge L."/>
            <person name="Larimer F."/>
            <person name="Vergez L.M."/>
            <person name="Worsham P."/>
            <person name="Chu M.C."/>
            <person name="Andersen G.L."/>
        </authorList>
    </citation>
    <scope>NUCLEOTIDE SEQUENCE [LARGE SCALE GENOMIC DNA]</scope>
    <source>
        <strain>Nepal516</strain>
    </source>
</reference>
<reference key="2">
    <citation type="submission" date="2009-04" db="EMBL/GenBank/DDBJ databases">
        <title>Yersinia pestis Nepal516A whole genome shotgun sequencing project.</title>
        <authorList>
            <person name="Plunkett G. III"/>
            <person name="Anderson B.D."/>
            <person name="Baumler D.J."/>
            <person name="Burland V."/>
            <person name="Cabot E.L."/>
            <person name="Glasner J.D."/>
            <person name="Mau B."/>
            <person name="Neeno-Eckwall E."/>
            <person name="Perna N.T."/>
            <person name="Munk A.C."/>
            <person name="Tapia R."/>
            <person name="Green L.D."/>
            <person name="Rogers Y.C."/>
            <person name="Detter J.C."/>
            <person name="Bruce D.C."/>
            <person name="Brettin T.S."/>
        </authorList>
    </citation>
    <scope>NUCLEOTIDE SEQUENCE [LARGE SCALE GENOMIC DNA]</scope>
    <source>
        <strain>Nepal516</strain>
    </source>
</reference>
<comment type="function">
    <text evidence="1">Catalyzes the dehydration of D-mannonate.</text>
</comment>
<comment type="catalytic activity">
    <reaction evidence="1">
        <text>D-mannonate = 2-dehydro-3-deoxy-D-gluconate + H2O</text>
        <dbReference type="Rhea" id="RHEA:20097"/>
        <dbReference type="ChEBI" id="CHEBI:15377"/>
        <dbReference type="ChEBI" id="CHEBI:17767"/>
        <dbReference type="ChEBI" id="CHEBI:57990"/>
        <dbReference type="EC" id="4.2.1.8"/>
    </reaction>
</comment>
<comment type="cofactor">
    <cofactor evidence="1">
        <name>Fe(2+)</name>
        <dbReference type="ChEBI" id="CHEBI:29033"/>
    </cofactor>
    <cofactor evidence="1">
        <name>Mn(2+)</name>
        <dbReference type="ChEBI" id="CHEBI:29035"/>
    </cofactor>
</comment>
<comment type="pathway">
    <text evidence="1">Carbohydrate metabolism; pentose and glucuronate interconversion.</text>
</comment>
<comment type="similarity">
    <text evidence="1">Belongs to the mannonate dehydratase family.</text>
</comment>
<name>UXUA_YERPN</name>
<feature type="chain" id="PRO_1000034343" description="Mannonate dehydratase">
    <location>
        <begin position="1"/>
        <end position="397"/>
    </location>
</feature>
<evidence type="ECO:0000255" key="1">
    <source>
        <dbReference type="HAMAP-Rule" id="MF_00106"/>
    </source>
</evidence>
<protein>
    <recommendedName>
        <fullName evidence="1">Mannonate dehydratase</fullName>
        <ecNumber evidence="1">4.2.1.8</ecNumber>
    </recommendedName>
    <alternativeName>
        <fullName evidence="1">D-mannonate hydro-lyase</fullName>
    </alternativeName>
</protein>
<keyword id="KW-0408">Iron</keyword>
<keyword id="KW-0456">Lyase</keyword>
<keyword id="KW-0464">Manganese</keyword>
<organism>
    <name type="scientific">Yersinia pestis bv. Antiqua (strain Nepal516)</name>
    <dbReference type="NCBI Taxonomy" id="377628"/>
    <lineage>
        <taxon>Bacteria</taxon>
        <taxon>Pseudomonadati</taxon>
        <taxon>Pseudomonadota</taxon>
        <taxon>Gammaproteobacteria</taxon>
        <taxon>Enterobacterales</taxon>
        <taxon>Yersiniaceae</taxon>
        <taxon>Yersinia</taxon>
    </lineage>
</organism>
<proteinExistence type="inferred from homology"/>
<sequence length="397" mass="44890">MEQTWRWYGPNDPVSLDDIRQAGATGVVTALHHIPNGVVWPVSEIKQRQAELAAKNLVWSVVESVPIHEDIKTHSGNYQQYIENYQQTLRNIAECGIDTVCYNFMPILDWTRTDLEYELPDGSKALRFDQIAFAAFELHILKRPGASNDYTAEEQVQAEAYFNAMTEADIAKLTGNIIAGLPGAEEGYTLDQFRARLAEYDGIDKAQLRENMAYFLRAIIPVAEQVGLRMAVHPDDPPRPILGLPRIVSTIEDMQWLKETVDSIHNGFTMCTGSYGVRADNDLVKMIETFGDRIHFTHLRSTCREGNPKTFHEGGHLQGDVDMYSVVKAILTEEQRRQSLGDMRPIPMRPDHGHQMLDDLHKKTNPGYSAIGRLKGLAEVRGVELALKRTFFPELKQ</sequence>
<accession>Q1CG57</accession>
<accession>C4GW54</accession>
<dbReference type="EC" id="4.2.1.8" evidence="1"/>
<dbReference type="EMBL" id="CP000305">
    <property type="protein sequence ID" value="ABG19023.1"/>
    <property type="molecule type" value="Genomic_DNA"/>
</dbReference>
<dbReference type="EMBL" id="ACNQ01000017">
    <property type="protein sequence ID" value="EEO75154.1"/>
    <property type="molecule type" value="Genomic_DNA"/>
</dbReference>
<dbReference type="RefSeq" id="WP_002208813.1">
    <property type="nucleotide sequence ID" value="NZ_ACNQ01000017.1"/>
</dbReference>
<dbReference type="SMR" id="Q1CG57"/>
<dbReference type="GeneID" id="57977416"/>
<dbReference type="KEGG" id="ypn:YPN_2695"/>
<dbReference type="HOGENOM" id="CLU_058621_2_0_6"/>
<dbReference type="UniPathway" id="UPA00246"/>
<dbReference type="Proteomes" id="UP000008936">
    <property type="component" value="Chromosome"/>
</dbReference>
<dbReference type="GO" id="GO:0008198">
    <property type="term" value="F:ferrous iron binding"/>
    <property type="evidence" value="ECO:0007669"/>
    <property type="project" value="TreeGrafter"/>
</dbReference>
<dbReference type="GO" id="GO:0030145">
    <property type="term" value="F:manganese ion binding"/>
    <property type="evidence" value="ECO:0007669"/>
    <property type="project" value="TreeGrafter"/>
</dbReference>
<dbReference type="GO" id="GO:0008927">
    <property type="term" value="F:mannonate dehydratase activity"/>
    <property type="evidence" value="ECO:0007669"/>
    <property type="project" value="UniProtKB-UniRule"/>
</dbReference>
<dbReference type="GO" id="GO:0042840">
    <property type="term" value="P:D-glucuronate catabolic process"/>
    <property type="evidence" value="ECO:0007669"/>
    <property type="project" value="TreeGrafter"/>
</dbReference>
<dbReference type="FunFam" id="3.20.20.150:FF:000010">
    <property type="entry name" value="Mannonate dehydratase"/>
    <property type="match status" value="1"/>
</dbReference>
<dbReference type="Gene3D" id="3.20.20.150">
    <property type="entry name" value="Divalent-metal-dependent TIM barrel enzymes"/>
    <property type="match status" value="1"/>
</dbReference>
<dbReference type="HAMAP" id="MF_00106">
    <property type="entry name" value="UxuA"/>
    <property type="match status" value="1"/>
</dbReference>
<dbReference type="InterPro" id="IPR004628">
    <property type="entry name" value="Man_deHydtase"/>
</dbReference>
<dbReference type="InterPro" id="IPR036237">
    <property type="entry name" value="Xyl_isomerase-like_sf"/>
</dbReference>
<dbReference type="NCBIfam" id="NF003027">
    <property type="entry name" value="PRK03906.1"/>
    <property type="match status" value="1"/>
</dbReference>
<dbReference type="NCBIfam" id="TIGR00695">
    <property type="entry name" value="uxuA"/>
    <property type="match status" value="1"/>
</dbReference>
<dbReference type="PANTHER" id="PTHR30387">
    <property type="entry name" value="MANNONATE DEHYDRATASE"/>
    <property type="match status" value="1"/>
</dbReference>
<dbReference type="PANTHER" id="PTHR30387:SF2">
    <property type="entry name" value="MANNONATE DEHYDRATASE"/>
    <property type="match status" value="1"/>
</dbReference>
<dbReference type="Pfam" id="PF03786">
    <property type="entry name" value="UxuA"/>
    <property type="match status" value="1"/>
</dbReference>
<dbReference type="PIRSF" id="PIRSF016049">
    <property type="entry name" value="Man_dehyd"/>
    <property type="match status" value="1"/>
</dbReference>
<dbReference type="SUPFAM" id="SSF51658">
    <property type="entry name" value="Xylose isomerase-like"/>
    <property type="match status" value="1"/>
</dbReference>
<gene>
    <name evidence="1" type="primary">uxuA</name>
    <name type="ordered locus">YPN_2695</name>
    <name type="ORF">YP516_3041</name>
</gene>